<keyword id="KW-0002">3D-structure</keyword>
<keyword id="KW-0067">ATP-binding</keyword>
<keyword id="KW-0436">Ligase</keyword>
<keyword id="KW-0460">Magnesium</keyword>
<keyword id="KW-0464">Manganese</keyword>
<keyword id="KW-0479">Metal-binding</keyword>
<keyword id="KW-0547">Nucleotide-binding</keyword>
<keyword id="KW-1185">Reference proteome</keyword>
<evidence type="ECO:0000255" key="1">
    <source>
        <dbReference type="PROSITE-ProRule" id="PRU00409"/>
    </source>
</evidence>
<evidence type="ECO:0000269" key="2">
    <source>
    </source>
</evidence>
<evidence type="ECO:0000303" key="3">
    <source>
    </source>
</evidence>
<evidence type="ECO:0000305" key="4"/>
<evidence type="ECO:0000312" key="5">
    <source>
        <dbReference type="EMBL" id="ABX12102.1"/>
    </source>
</evidence>
<evidence type="ECO:0007829" key="6">
    <source>
        <dbReference type="PDB" id="8WZU"/>
    </source>
</evidence>
<accession>A9A1Y1</accession>
<reference key="1">
    <citation type="journal article" date="2010" name="Proc. Natl. Acad. Sci. U.S.A.">
        <title>Nitrosopumilus maritimus genome reveals unique mechanisms for nitrification and autotrophy in globally distributed marine crenarchaea.</title>
        <authorList>
            <person name="Walker C.B."/>
            <person name="de la Torre J.R."/>
            <person name="Klotz M.G."/>
            <person name="Urakawa H."/>
            <person name="Pinel N."/>
            <person name="Arp D.J."/>
            <person name="Brochier-Armanet C."/>
            <person name="Chain P.S."/>
            <person name="Chan P.P."/>
            <person name="Gollabgir A."/>
            <person name="Hemp J."/>
            <person name="Hugler M."/>
            <person name="Karr E.A."/>
            <person name="Konneke M."/>
            <person name="Shin M."/>
            <person name="Lawton T.J."/>
            <person name="Lowe T."/>
            <person name="Martens-Habbena W."/>
            <person name="Sayavedra-Soto L.A."/>
            <person name="Lang D."/>
            <person name="Sievert S.M."/>
            <person name="Rosenzweig A.C."/>
            <person name="Manning G."/>
            <person name="Stahl D.A."/>
        </authorList>
    </citation>
    <scope>NUCLEOTIDE SEQUENCE [LARGE SCALE GENOMIC DNA]</scope>
    <source>
        <strain>SCM1</strain>
    </source>
</reference>
<reference key="2">
    <citation type="journal article" date="2014" name="Proc. Natl. Acad. Sci. U.S.A.">
        <title>Ammonia-oxidizing archaea use the most energy-efficient aerobic pathway for CO2 fixation.</title>
        <authorList>
            <person name="Koenneke M."/>
            <person name="Schubert D.M."/>
            <person name="Brown P.C."/>
            <person name="Huegler M."/>
            <person name="Standfest S."/>
            <person name="Schwander T."/>
            <person name="Schada von Borzyskowski L."/>
            <person name="Erb T.J."/>
            <person name="Stahl D.A."/>
            <person name="Berg I.A."/>
        </authorList>
    </citation>
    <scope>FUNCTION</scope>
    <scope>CATALYTIC ACTIVITY</scope>
    <scope>COFACTOR</scope>
    <scope>BIOPHYSICOCHEMICAL PROPERTIES</scope>
    <source>
        <strain>SCM1</strain>
    </source>
</reference>
<feature type="chain" id="PRO_0000453089" description="4-hydroxybutyrate--CoA ligase [ADP-forming]">
    <location>
        <begin position="1"/>
        <end position="698"/>
    </location>
</feature>
<feature type="domain" description="ATP-grasp" evidence="1">
    <location>
        <begin position="491"/>
        <end position="544"/>
    </location>
</feature>
<feature type="binding site" evidence="1">
    <location>
        <begin position="517"/>
        <end position="544"/>
    </location>
    <ligand>
        <name>ATP</name>
        <dbReference type="ChEBI" id="CHEBI:30616"/>
    </ligand>
</feature>
<feature type="helix" evidence="6">
    <location>
        <begin position="4"/>
        <end position="7"/>
    </location>
</feature>
<feature type="strand" evidence="6">
    <location>
        <begin position="10"/>
        <end position="14"/>
    </location>
</feature>
<feature type="helix" evidence="6">
    <location>
        <begin position="24"/>
        <end position="35"/>
    </location>
</feature>
<feature type="strand" evidence="6">
    <location>
        <begin position="37"/>
        <end position="43"/>
    </location>
</feature>
<feature type="strand" evidence="6">
    <location>
        <begin position="48"/>
        <end position="50"/>
    </location>
</feature>
<feature type="strand" evidence="6">
    <location>
        <begin position="56"/>
        <end position="58"/>
    </location>
</feature>
<feature type="helix" evidence="6">
    <location>
        <begin position="59"/>
        <end position="61"/>
    </location>
</feature>
<feature type="strand" evidence="6">
    <location>
        <begin position="67"/>
        <end position="71"/>
    </location>
</feature>
<feature type="helix" evidence="6">
    <location>
        <begin position="75"/>
        <end position="77"/>
    </location>
</feature>
<feature type="helix" evidence="6">
    <location>
        <begin position="78"/>
        <end position="87"/>
    </location>
</feature>
<feature type="strand" evidence="6">
    <location>
        <begin position="92"/>
        <end position="95"/>
    </location>
</feature>
<feature type="strand" evidence="6">
    <location>
        <begin position="100"/>
        <end position="103"/>
    </location>
</feature>
<feature type="helix" evidence="6">
    <location>
        <begin position="105"/>
        <end position="121"/>
    </location>
</feature>
<feature type="strand" evidence="6">
    <location>
        <begin position="124"/>
        <end position="126"/>
    </location>
</feature>
<feature type="strand" evidence="6">
    <location>
        <begin position="132"/>
        <end position="135"/>
    </location>
</feature>
<feature type="turn" evidence="6">
    <location>
        <begin position="138"/>
        <end position="140"/>
    </location>
</feature>
<feature type="strand" evidence="6">
    <location>
        <begin position="142"/>
        <end position="145"/>
    </location>
</feature>
<feature type="strand" evidence="6">
    <location>
        <begin position="152"/>
        <end position="161"/>
    </location>
</feature>
<feature type="helix" evidence="6">
    <location>
        <begin position="163"/>
        <end position="176"/>
    </location>
</feature>
<feature type="strand" evidence="6">
    <location>
        <begin position="179"/>
        <end position="185"/>
    </location>
</feature>
<feature type="helix" evidence="6">
    <location>
        <begin position="194"/>
        <end position="202"/>
    </location>
</feature>
<feature type="strand" evidence="6">
    <location>
        <begin position="209"/>
        <end position="215"/>
    </location>
</feature>
<feature type="helix" evidence="6">
    <location>
        <begin position="220"/>
        <end position="232"/>
    </location>
</feature>
<feature type="strand" evidence="6">
    <location>
        <begin position="238"/>
        <end position="242"/>
    </location>
</feature>
<feature type="helix" evidence="6">
    <location>
        <begin position="247"/>
        <end position="257"/>
    </location>
</feature>
<feature type="helix" evidence="6">
    <location>
        <begin position="264"/>
        <end position="273"/>
    </location>
</feature>
<feature type="helix" evidence="6">
    <location>
        <begin position="283"/>
        <end position="294"/>
    </location>
</feature>
<feature type="strand" evidence="6">
    <location>
        <begin position="300"/>
        <end position="308"/>
    </location>
</feature>
<feature type="helix" evidence="6">
    <location>
        <begin position="310"/>
        <end position="323"/>
    </location>
</feature>
<feature type="helix" evidence="6">
    <location>
        <begin position="331"/>
        <end position="333"/>
    </location>
</feature>
<feature type="helix" evidence="6">
    <location>
        <begin position="334"/>
        <end position="340"/>
    </location>
</feature>
<feature type="strand" evidence="6">
    <location>
        <begin position="348"/>
        <end position="352"/>
    </location>
</feature>
<feature type="helix" evidence="6">
    <location>
        <begin position="359"/>
        <end position="371"/>
    </location>
</feature>
<feature type="strand" evidence="6">
    <location>
        <begin position="375"/>
        <end position="382"/>
    </location>
</feature>
<feature type="helix" evidence="6">
    <location>
        <begin position="390"/>
        <end position="403"/>
    </location>
</feature>
<feature type="strand" evidence="6">
    <location>
        <begin position="406"/>
        <end position="412"/>
    </location>
</feature>
<feature type="strand" evidence="6">
    <location>
        <begin position="414"/>
        <end position="416"/>
    </location>
</feature>
<feature type="helix" evidence="6">
    <location>
        <begin position="418"/>
        <end position="427"/>
    </location>
</feature>
<feature type="helix" evidence="6">
    <location>
        <begin position="436"/>
        <end position="454"/>
    </location>
</feature>
<feature type="helix" evidence="6">
    <location>
        <begin position="470"/>
        <end position="479"/>
    </location>
</feature>
<feature type="helix" evidence="6">
    <location>
        <begin position="487"/>
        <end position="496"/>
    </location>
</feature>
<feature type="strand" evidence="6">
    <location>
        <begin position="586"/>
        <end position="594"/>
    </location>
</feature>
<feature type="turn" evidence="6">
    <location>
        <begin position="595"/>
        <end position="597"/>
    </location>
</feature>
<feature type="strand" evidence="6">
    <location>
        <begin position="598"/>
        <end position="605"/>
    </location>
</feature>
<feature type="helix" evidence="6">
    <location>
        <begin position="607"/>
        <end position="609"/>
    </location>
</feature>
<feature type="helix" evidence="6">
    <location>
        <begin position="610"/>
        <end position="613"/>
    </location>
</feature>
<feature type="strand" evidence="6">
    <location>
        <begin position="616"/>
        <end position="622"/>
    </location>
</feature>
<feature type="helix" evidence="6">
    <location>
        <begin position="625"/>
        <end position="633"/>
    </location>
</feature>
<feature type="strand" evidence="6">
    <location>
        <begin position="640"/>
        <end position="642"/>
    </location>
</feature>
<feature type="helix" evidence="6">
    <location>
        <begin position="652"/>
        <end position="668"/>
    </location>
</feature>
<feature type="strand" evidence="6">
    <location>
        <begin position="674"/>
        <end position="682"/>
    </location>
</feature>
<feature type="strand" evidence="6">
    <location>
        <begin position="684"/>
        <end position="687"/>
    </location>
</feature>
<feature type="strand" evidence="6">
    <location>
        <begin position="689"/>
        <end position="691"/>
    </location>
</feature>
<feature type="strand" evidence="6">
    <location>
        <begin position="695"/>
        <end position="697"/>
    </location>
</feature>
<protein>
    <recommendedName>
        <fullName evidence="4">4-hydroxybutyrate--CoA ligase [ADP-forming]</fullName>
        <ecNumber evidence="2">6.2.1.56</ecNumber>
    </recommendedName>
    <alternativeName>
        <fullName evidence="4">4-hydroxybutyryl-coenzyme A synthetase [ADP-forming]</fullName>
        <shortName evidence="3">4-hydroxybutyryl-CoA synthetase [ADP-forming]</shortName>
    </alternativeName>
</protein>
<name>HBCAL_NITMS</name>
<proteinExistence type="evidence at protein level"/>
<sequence>MTDSPILSPKSIAVIGASDKRGSVGATITSNIMNGFKGTVYPISPTRDTVFYKKAYKSVLDVPKSIDLAVIVIKNTLVTPVLEECGKKKIKGVIIITAGFKEVDEEGAKREQQVIDIAKKYNMQVVGPNCLGVMNLDSKTMMNSTFLKVTPKSGKIALVSQSGAICAALVEDASAQGIGFSAVVSLGNKAVMSEVDVLKILANHKQTEVIVMYLEDMGDGQEFLKVCKNITKKLKKPVLVLKSGRSPEGAKAAMSHTGALMGSDEIYDALLKQSGAIRVDTMEELFDYATAFSKQPLPSNGDLVIVSNAGGPAIISTDACSKAKIKMADITSIRKKIDEVIPPWGSSRNPVDIVGDADFNRFHNVLDRVLKHPKVGSVISMCTPSGTLNYDKLAEVIVEMSKKYKKTMLASLMGLDEGVTNREILADGNVPYYTYAEGAIRTLAAMIRFSDWVKSSPGKITKFKVNKAKAKKIFDQVKKEKRPNLLEEEGQEVLKAYGLPLPKSTLAKNEAEAVKAAKKIGYPVVMKIASPQIIHKSDAGGVKVNLTNDAEVKDAFKTIVKNAKKYNKKAEIKGVLIVEMVKGGKELIIGSKLEPGFGPVIMLGMGGIYVEVLKDVTFKLAPVTDKEADDMIASIKTQKLLQGVRGEKPSDIVKLSECIQRLSQLVSDFKEIKELDMNPVLVMEKGKGCRILDVRIGL</sequence>
<comment type="function">
    <text evidence="2">Involved in thaumarchaeal hydroxypropionate/hydroxybutyrate (HP/HB) cycle, a modified version of the autotrophic HP/HB cycle of Crenarchaeota. Catalyzes the formation of 4-hydroxybutyryl-CoA, ADP and phosphate from 4-hydroxybutyrate, coenzyme A (CoA) and ATP. Can also use acetate, propionate and butyrate, with poor catalytic efficiency.</text>
</comment>
<comment type="catalytic activity">
    <reaction evidence="2">
        <text>4-hydroxybutanoate + ATP + CoA = 4-hydroxybutanoyl-CoA + ADP + phosphate</text>
        <dbReference type="Rhea" id="RHEA:58896"/>
        <dbReference type="ChEBI" id="CHEBI:16724"/>
        <dbReference type="ChEBI" id="CHEBI:30616"/>
        <dbReference type="ChEBI" id="CHEBI:43474"/>
        <dbReference type="ChEBI" id="CHEBI:57287"/>
        <dbReference type="ChEBI" id="CHEBI:58574"/>
        <dbReference type="ChEBI" id="CHEBI:456216"/>
        <dbReference type="EC" id="6.2.1.56"/>
    </reaction>
</comment>
<comment type="cofactor">
    <cofactor evidence="2">
        <name>Mg(2+)</name>
        <dbReference type="ChEBI" id="CHEBI:18420"/>
    </cofactor>
    <cofactor evidence="2">
        <name>Mn(2+)</name>
        <dbReference type="ChEBI" id="CHEBI:29035"/>
    </cofactor>
    <text evidence="2">No activity with Ni(2+), Co(2+) and Ca(2+).</text>
</comment>
<comment type="biophysicochemical properties">
    <kinetics>
        <KM evidence="2">0.37 mM for 4-hydroxybutyrate</KM>
        <KM evidence="2">200 mM for acetate</KM>
        <KM evidence="2">88 mM for propionate</KM>
        <KM evidence="2">5 mM for butyrate</KM>
        <KM evidence="2">0.22 mM for ATP</KM>
        <KM evidence="2">0.16 mM for CoA</KM>
        <Vmax evidence="2">1.4 umol/min/mg enzyme with 4-hydroxybutyrate as substrate</Vmax>
        <Vmax evidence="2">0.22 umol/min/mg enzyme with acetate as substrate</Vmax>
        <Vmax evidence="2">0.1 umol/min/mg enzyme with propionate as substrate</Vmax>
        <Vmax evidence="2">0.61 umol/min/mg enzyme with butyrate as substrate</Vmax>
        <Vmax evidence="2">1.7 umol/min/mg enzyme with ATP as substrate</Vmax>
        <Vmax evidence="2">1.4 umol/min/mg enzyme with CoA as substrate</Vmax>
    </kinetics>
</comment>
<comment type="similarity">
    <text evidence="4">In the N-terminal section; belongs to the acetate CoA ligase alpha subunit family.</text>
</comment>
<comment type="similarity">
    <text evidence="4">In the C-terminal section; belongs to the acetate CoA ligase beta subunit family.</text>
</comment>
<dbReference type="EC" id="6.2.1.56" evidence="2"/>
<dbReference type="EMBL" id="CP000866">
    <property type="protein sequence ID" value="ABX12102.1"/>
    <property type="molecule type" value="Genomic_DNA"/>
</dbReference>
<dbReference type="RefSeq" id="WP_012214589.1">
    <property type="nucleotide sequence ID" value="NC_010085.1"/>
</dbReference>
<dbReference type="PDB" id="8WZU">
    <property type="method" value="X-ray"/>
    <property type="resolution" value="2.80 A"/>
    <property type="chains" value="A/B=1-698"/>
</dbReference>
<dbReference type="PDBsum" id="8WZU"/>
<dbReference type="SMR" id="A9A1Y1"/>
<dbReference type="FunCoup" id="A9A1Y1">
    <property type="interactions" value="30"/>
</dbReference>
<dbReference type="STRING" id="436308.Nmar_0206"/>
<dbReference type="EnsemblBacteria" id="ABX12102">
    <property type="protein sequence ID" value="ABX12102"/>
    <property type="gene ID" value="Nmar_0206"/>
</dbReference>
<dbReference type="GeneID" id="5773751"/>
<dbReference type="KEGG" id="nmr:Nmar_0206"/>
<dbReference type="eggNOG" id="arCOG01340">
    <property type="taxonomic scope" value="Archaea"/>
</dbReference>
<dbReference type="HOGENOM" id="CLU_007415_3_1_2"/>
<dbReference type="InParanoid" id="A9A1Y1"/>
<dbReference type="OrthoDB" id="18103at2157"/>
<dbReference type="PhylomeDB" id="A9A1Y1"/>
<dbReference type="BioCyc" id="MetaCyc:MONOMER-20107"/>
<dbReference type="BRENDA" id="6.2.1.56">
    <property type="organism ID" value="10773"/>
</dbReference>
<dbReference type="Proteomes" id="UP000000792">
    <property type="component" value="Chromosome"/>
</dbReference>
<dbReference type="GO" id="GO:0043758">
    <property type="term" value="F:acetate-CoA ligase (ADP-forming) activity"/>
    <property type="evidence" value="ECO:0007669"/>
    <property type="project" value="InterPro"/>
</dbReference>
<dbReference type="GO" id="GO:0005524">
    <property type="term" value="F:ATP binding"/>
    <property type="evidence" value="ECO:0007669"/>
    <property type="project" value="UniProtKB-KW"/>
</dbReference>
<dbReference type="GO" id="GO:0046872">
    <property type="term" value="F:metal ion binding"/>
    <property type="evidence" value="ECO:0007669"/>
    <property type="project" value="UniProtKB-KW"/>
</dbReference>
<dbReference type="FunFam" id="3.30.1490.20:FF:000020">
    <property type="entry name" value="Protein lysine acetyltransferase"/>
    <property type="match status" value="1"/>
</dbReference>
<dbReference type="Gene3D" id="3.30.1490.20">
    <property type="entry name" value="ATP-grasp fold, A domain"/>
    <property type="match status" value="1"/>
</dbReference>
<dbReference type="Gene3D" id="3.30.470.20">
    <property type="entry name" value="ATP-grasp fold, B domain"/>
    <property type="match status" value="1"/>
</dbReference>
<dbReference type="Gene3D" id="3.40.50.720">
    <property type="entry name" value="NAD(P)-binding Rossmann-like Domain"/>
    <property type="match status" value="1"/>
</dbReference>
<dbReference type="Gene3D" id="3.40.50.261">
    <property type="entry name" value="Succinyl-CoA synthetase domains"/>
    <property type="match status" value="2"/>
</dbReference>
<dbReference type="InterPro" id="IPR053580">
    <property type="entry name" value="4-HB-CoA_ligase_ADP-forming"/>
</dbReference>
<dbReference type="InterPro" id="IPR051538">
    <property type="entry name" value="Acyl-CoA_Synth/Transferase"/>
</dbReference>
<dbReference type="InterPro" id="IPR011761">
    <property type="entry name" value="ATP-grasp"/>
</dbReference>
<dbReference type="InterPro" id="IPR013815">
    <property type="entry name" value="ATP_grasp_subdomain_1"/>
</dbReference>
<dbReference type="InterPro" id="IPR003781">
    <property type="entry name" value="CoA-bd"/>
</dbReference>
<dbReference type="InterPro" id="IPR043938">
    <property type="entry name" value="Ligase_CoA_dom"/>
</dbReference>
<dbReference type="InterPro" id="IPR036291">
    <property type="entry name" value="NAD(P)-bd_dom_sf"/>
</dbReference>
<dbReference type="InterPro" id="IPR032875">
    <property type="entry name" value="Succ_CoA_lig_flav_dom"/>
</dbReference>
<dbReference type="InterPro" id="IPR016102">
    <property type="entry name" value="Succinyl-CoA_synth-like"/>
</dbReference>
<dbReference type="NCBIfam" id="NF045493">
    <property type="entry name" value="HydDutCoALig"/>
    <property type="match status" value="1"/>
</dbReference>
<dbReference type="PANTHER" id="PTHR43334">
    <property type="entry name" value="ACETATE--COA LIGASE [ADP-FORMING]"/>
    <property type="match status" value="1"/>
</dbReference>
<dbReference type="PANTHER" id="PTHR43334:SF2">
    <property type="entry name" value="ACETATE--COA LIGASE [ADP-FORMING]"/>
    <property type="match status" value="1"/>
</dbReference>
<dbReference type="Pfam" id="PF13549">
    <property type="entry name" value="ATP-grasp_5"/>
    <property type="match status" value="1"/>
</dbReference>
<dbReference type="Pfam" id="PF13380">
    <property type="entry name" value="CoA_binding_2"/>
    <property type="match status" value="1"/>
</dbReference>
<dbReference type="Pfam" id="PF19045">
    <property type="entry name" value="Ligase_CoA_2"/>
    <property type="match status" value="1"/>
</dbReference>
<dbReference type="Pfam" id="PF13607">
    <property type="entry name" value="Succ_CoA_lig"/>
    <property type="match status" value="1"/>
</dbReference>
<dbReference type="SMART" id="SM00881">
    <property type="entry name" value="CoA_binding"/>
    <property type="match status" value="1"/>
</dbReference>
<dbReference type="SUPFAM" id="SSF56059">
    <property type="entry name" value="Glutathione synthetase ATP-binding domain-like"/>
    <property type="match status" value="1"/>
</dbReference>
<dbReference type="SUPFAM" id="SSF51735">
    <property type="entry name" value="NAD(P)-binding Rossmann-fold domains"/>
    <property type="match status" value="1"/>
</dbReference>
<dbReference type="SUPFAM" id="SSF52210">
    <property type="entry name" value="Succinyl-CoA synthetase domains"/>
    <property type="match status" value="2"/>
</dbReference>
<dbReference type="PROSITE" id="PS50975">
    <property type="entry name" value="ATP_GRASP"/>
    <property type="match status" value="1"/>
</dbReference>
<gene>
    <name evidence="5" type="ordered locus">Nmar_0206</name>
</gene>
<organism>
    <name type="scientific">Nitrosopumilus maritimus (strain SCM1)</name>
    <dbReference type="NCBI Taxonomy" id="436308"/>
    <lineage>
        <taxon>Archaea</taxon>
        <taxon>Nitrososphaerota</taxon>
        <taxon>Nitrososphaeria</taxon>
        <taxon>Nitrosopumilales</taxon>
        <taxon>Nitrosopumilaceae</taxon>
        <taxon>Nitrosopumilus</taxon>
    </lineage>
</organism>